<accession>Q5KWJ3</accession>
<comment type="function">
    <text evidence="1">Catalyzes the condensation of the acetyl group of acetyl-CoA with 3-methyl-2-oxobutanoate (2-ketoisovalerate) to form 3-carboxy-3-hydroxy-4-methylpentanoate (2-isopropylmalate).</text>
</comment>
<comment type="catalytic activity">
    <reaction evidence="1">
        <text>3-methyl-2-oxobutanoate + acetyl-CoA + H2O = (2S)-2-isopropylmalate + CoA + H(+)</text>
        <dbReference type="Rhea" id="RHEA:21524"/>
        <dbReference type="ChEBI" id="CHEBI:1178"/>
        <dbReference type="ChEBI" id="CHEBI:11851"/>
        <dbReference type="ChEBI" id="CHEBI:15377"/>
        <dbReference type="ChEBI" id="CHEBI:15378"/>
        <dbReference type="ChEBI" id="CHEBI:57287"/>
        <dbReference type="ChEBI" id="CHEBI:57288"/>
        <dbReference type="EC" id="2.3.3.13"/>
    </reaction>
</comment>
<comment type="cofactor">
    <cofactor evidence="1">
        <name>Mn(2+)</name>
        <dbReference type="ChEBI" id="CHEBI:29035"/>
    </cofactor>
</comment>
<comment type="pathway">
    <text evidence="1">Amino-acid biosynthesis; L-leucine biosynthesis; L-leucine from 3-methyl-2-oxobutanoate: step 1/4.</text>
</comment>
<comment type="subunit">
    <text evidence="1">Homodimer.</text>
</comment>
<comment type="subcellular location">
    <subcellularLocation>
        <location evidence="1">Cytoplasm</location>
    </subcellularLocation>
</comment>
<comment type="similarity">
    <text evidence="1">Belongs to the alpha-IPM synthase/homocitrate synthase family. LeuA type 1 subfamily.</text>
</comment>
<reference key="1">
    <citation type="journal article" date="2004" name="Nucleic Acids Res.">
        <title>Thermoadaptation trait revealed by the genome sequence of thermophilic Geobacillus kaustophilus.</title>
        <authorList>
            <person name="Takami H."/>
            <person name="Takaki Y."/>
            <person name="Chee G.-J."/>
            <person name="Nishi S."/>
            <person name="Shimamura S."/>
            <person name="Suzuki H."/>
            <person name="Matsui S."/>
            <person name="Uchiyama I."/>
        </authorList>
    </citation>
    <scope>NUCLEOTIDE SEQUENCE [LARGE SCALE GENOMIC DNA]</scope>
    <source>
        <strain>HTA426</strain>
    </source>
</reference>
<protein>
    <recommendedName>
        <fullName evidence="1">2-isopropylmalate synthase</fullName>
        <ecNumber evidence="1">2.3.3.13</ecNumber>
    </recommendedName>
    <alternativeName>
        <fullName evidence="1">Alpha-IPM synthase</fullName>
    </alternativeName>
    <alternativeName>
        <fullName evidence="1">Alpha-isopropylmalate synthase</fullName>
    </alternativeName>
</protein>
<sequence>MRKIKFFDTTLRDGEQSAGVNLNLQEKLEIARQLERLRVDIIEAGFPASSKGDFEAVKQIAETVRTCSVTGLSRSVRSDIDAAWEALKGGAEPRLHLFIATSPIHMVHKLRMTPEQVIEAAVEAVKYAKRFFPIVQWSAEDACRSELPFLAKIVAEVIKAGASVINIPDTVGYITPKEYGEIFLYLQNNVPNIENVSLSAHCHDDLGMAVVNSLSAIEHGATQVECTINGIGERAGNAALEEIAVALHIRKDYYQVETRLNLQEIKRTSNLVSKLTGVVVPPNKAVVGKNAFAHESGIHQDGVLKEKTTYEIISPELVGVPSNSMVLGKHSGRHALRNRVEELGYTLSDEEINQLFVRFKELADKKKDITDDDLIALIFEEKFDHFKDFYQLSSIQVQYGTNQIPTAVVVLKDGKGNEIQEAATGAGSVEALYNTLERCFQTPVTLLDYRIESVGGGRDALAQVFVKVRAHDIETSGRGTAQDVLEASAKAYINAINRVFMIEAMRGENEKVATP</sequence>
<evidence type="ECO:0000255" key="1">
    <source>
        <dbReference type="HAMAP-Rule" id="MF_01025"/>
    </source>
</evidence>
<gene>
    <name evidence="1" type="primary">leuA</name>
    <name type="ordered locus">GK2658</name>
</gene>
<organism>
    <name type="scientific">Geobacillus kaustophilus (strain HTA426)</name>
    <dbReference type="NCBI Taxonomy" id="235909"/>
    <lineage>
        <taxon>Bacteria</taxon>
        <taxon>Bacillati</taxon>
        <taxon>Bacillota</taxon>
        <taxon>Bacilli</taxon>
        <taxon>Bacillales</taxon>
        <taxon>Anoxybacillaceae</taxon>
        <taxon>Geobacillus</taxon>
        <taxon>Geobacillus thermoleovorans group</taxon>
    </lineage>
</organism>
<keyword id="KW-0028">Amino-acid biosynthesis</keyword>
<keyword id="KW-0100">Branched-chain amino acid biosynthesis</keyword>
<keyword id="KW-0963">Cytoplasm</keyword>
<keyword id="KW-0432">Leucine biosynthesis</keyword>
<keyword id="KW-0464">Manganese</keyword>
<keyword id="KW-0479">Metal-binding</keyword>
<keyword id="KW-1185">Reference proteome</keyword>
<keyword id="KW-0808">Transferase</keyword>
<proteinExistence type="inferred from homology"/>
<dbReference type="EC" id="2.3.3.13" evidence="1"/>
<dbReference type="EMBL" id="BA000043">
    <property type="protein sequence ID" value="BAD76943.1"/>
    <property type="molecule type" value="Genomic_DNA"/>
</dbReference>
<dbReference type="RefSeq" id="WP_011232134.1">
    <property type="nucleotide sequence ID" value="NC_006510.1"/>
</dbReference>
<dbReference type="SMR" id="Q5KWJ3"/>
<dbReference type="STRING" id="235909.GK2658"/>
<dbReference type="KEGG" id="gka:GK2658"/>
<dbReference type="eggNOG" id="COG0119">
    <property type="taxonomic scope" value="Bacteria"/>
</dbReference>
<dbReference type="HOGENOM" id="CLU_022158_0_1_9"/>
<dbReference type="UniPathway" id="UPA00048">
    <property type="reaction ID" value="UER00070"/>
</dbReference>
<dbReference type="Proteomes" id="UP000001172">
    <property type="component" value="Chromosome"/>
</dbReference>
<dbReference type="GO" id="GO:0005737">
    <property type="term" value="C:cytoplasm"/>
    <property type="evidence" value="ECO:0007669"/>
    <property type="project" value="UniProtKB-SubCell"/>
</dbReference>
<dbReference type="GO" id="GO:0003852">
    <property type="term" value="F:2-isopropylmalate synthase activity"/>
    <property type="evidence" value="ECO:0007669"/>
    <property type="project" value="UniProtKB-UniRule"/>
</dbReference>
<dbReference type="GO" id="GO:0003985">
    <property type="term" value="F:acetyl-CoA C-acetyltransferase activity"/>
    <property type="evidence" value="ECO:0007669"/>
    <property type="project" value="UniProtKB-UniRule"/>
</dbReference>
<dbReference type="GO" id="GO:0030145">
    <property type="term" value="F:manganese ion binding"/>
    <property type="evidence" value="ECO:0007669"/>
    <property type="project" value="UniProtKB-UniRule"/>
</dbReference>
<dbReference type="GO" id="GO:0009098">
    <property type="term" value="P:L-leucine biosynthetic process"/>
    <property type="evidence" value="ECO:0007669"/>
    <property type="project" value="UniProtKB-UniRule"/>
</dbReference>
<dbReference type="CDD" id="cd07940">
    <property type="entry name" value="DRE_TIM_IPMS"/>
    <property type="match status" value="1"/>
</dbReference>
<dbReference type="FunFam" id="1.10.238.260:FF:000001">
    <property type="entry name" value="2-isopropylmalate synthase"/>
    <property type="match status" value="1"/>
</dbReference>
<dbReference type="FunFam" id="3.20.20.70:FF:000010">
    <property type="entry name" value="2-isopropylmalate synthase"/>
    <property type="match status" value="1"/>
</dbReference>
<dbReference type="FunFam" id="3.30.160.270:FF:000003">
    <property type="entry name" value="2-isopropylmalate synthase"/>
    <property type="match status" value="1"/>
</dbReference>
<dbReference type="Gene3D" id="1.10.238.260">
    <property type="match status" value="1"/>
</dbReference>
<dbReference type="Gene3D" id="3.30.160.270">
    <property type="match status" value="1"/>
</dbReference>
<dbReference type="Gene3D" id="3.20.20.70">
    <property type="entry name" value="Aldolase class I"/>
    <property type="match status" value="1"/>
</dbReference>
<dbReference type="HAMAP" id="MF_01025">
    <property type="entry name" value="LeuA_type1"/>
    <property type="match status" value="1"/>
</dbReference>
<dbReference type="InterPro" id="IPR050073">
    <property type="entry name" value="2-IPM_HCS-like"/>
</dbReference>
<dbReference type="InterPro" id="IPR013709">
    <property type="entry name" value="2-isopropylmalate_synth_dimer"/>
</dbReference>
<dbReference type="InterPro" id="IPR002034">
    <property type="entry name" value="AIPM/Hcit_synth_CS"/>
</dbReference>
<dbReference type="InterPro" id="IPR013785">
    <property type="entry name" value="Aldolase_TIM"/>
</dbReference>
<dbReference type="InterPro" id="IPR054691">
    <property type="entry name" value="LeuA/HCS_post-cat"/>
</dbReference>
<dbReference type="InterPro" id="IPR036230">
    <property type="entry name" value="LeuA_allosteric_dom_sf"/>
</dbReference>
<dbReference type="InterPro" id="IPR005671">
    <property type="entry name" value="LeuA_bact_synth"/>
</dbReference>
<dbReference type="InterPro" id="IPR000891">
    <property type="entry name" value="PYR_CT"/>
</dbReference>
<dbReference type="NCBIfam" id="TIGR00973">
    <property type="entry name" value="leuA_bact"/>
    <property type="match status" value="1"/>
</dbReference>
<dbReference type="NCBIfam" id="NF002086">
    <property type="entry name" value="PRK00915.1-3"/>
    <property type="match status" value="1"/>
</dbReference>
<dbReference type="NCBIfam" id="NF002088">
    <property type="entry name" value="PRK00915.1-5"/>
    <property type="match status" value="1"/>
</dbReference>
<dbReference type="PANTHER" id="PTHR10277:SF9">
    <property type="entry name" value="2-ISOPROPYLMALATE SYNTHASE 1, CHLOROPLASTIC-RELATED"/>
    <property type="match status" value="1"/>
</dbReference>
<dbReference type="PANTHER" id="PTHR10277">
    <property type="entry name" value="HOMOCITRATE SYNTHASE-RELATED"/>
    <property type="match status" value="1"/>
</dbReference>
<dbReference type="Pfam" id="PF22617">
    <property type="entry name" value="HCS_D2"/>
    <property type="match status" value="1"/>
</dbReference>
<dbReference type="Pfam" id="PF00682">
    <property type="entry name" value="HMGL-like"/>
    <property type="match status" value="1"/>
</dbReference>
<dbReference type="Pfam" id="PF08502">
    <property type="entry name" value="LeuA_dimer"/>
    <property type="match status" value="1"/>
</dbReference>
<dbReference type="SMART" id="SM00917">
    <property type="entry name" value="LeuA_dimer"/>
    <property type="match status" value="1"/>
</dbReference>
<dbReference type="SUPFAM" id="SSF110921">
    <property type="entry name" value="2-isopropylmalate synthase LeuA, allosteric (dimerisation) domain"/>
    <property type="match status" value="1"/>
</dbReference>
<dbReference type="SUPFAM" id="SSF51569">
    <property type="entry name" value="Aldolase"/>
    <property type="match status" value="1"/>
</dbReference>
<dbReference type="PROSITE" id="PS00815">
    <property type="entry name" value="AIPM_HOMOCIT_SYNTH_1"/>
    <property type="match status" value="1"/>
</dbReference>
<dbReference type="PROSITE" id="PS50991">
    <property type="entry name" value="PYR_CT"/>
    <property type="match status" value="1"/>
</dbReference>
<feature type="chain" id="PRO_1000149203" description="2-isopropylmalate synthase">
    <location>
        <begin position="1"/>
        <end position="515"/>
    </location>
</feature>
<feature type="domain" description="Pyruvate carboxyltransferase" evidence="1">
    <location>
        <begin position="4"/>
        <end position="266"/>
    </location>
</feature>
<feature type="region of interest" description="Regulatory domain" evidence="1">
    <location>
        <begin position="391"/>
        <end position="515"/>
    </location>
</feature>
<feature type="binding site" evidence="1">
    <location>
        <position position="13"/>
    </location>
    <ligand>
        <name>Mn(2+)</name>
        <dbReference type="ChEBI" id="CHEBI:29035"/>
    </ligand>
</feature>
<feature type="binding site" evidence="1">
    <location>
        <position position="201"/>
    </location>
    <ligand>
        <name>Mn(2+)</name>
        <dbReference type="ChEBI" id="CHEBI:29035"/>
    </ligand>
</feature>
<feature type="binding site" evidence="1">
    <location>
        <position position="203"/>
    </location>
    <ligand>
        <name>Mn(2+)</name>
        <dbReference type="ChEBI" id="CHEBI:29035"/>
    </ligand>
</feature>
<feature type="binding site" evidence="1">
    <location>
        <position position="237"/>
    </location>
    <ligand>
        <name>Mn(2+)</name>
        <dbReference type="ChEBI" id="CHEBI:29035"/>
    </ligand>
</feature>
<name>LEU1_GEOKA</name>